<proteinExistence type="inferred from homology"/>
<protein>
    <recommendedName>
        <fullName evidence="1">Integration host factor subunit beta</fullName>
        <shortName evidence="1">IHF-beta</shortName>
    </recommendedName>
</protein>
<dbReference type="EMBL" id="CP000958">
    <property type="protein sequence ID" value="ACA90184.1"/>
    <property type="molecule type" value="Genomic_DNA"/>
</dbReference>
<dbReference type="RefSeq" id="WP_011544886.1">
    <property type="nucleotide sequence ID" value="NC_010508.1"/>
</dbReference>
<dbReference type="SMR" id="B1JXS2"/>
<dbReference type="GeneID" id="83047800"/>
<dbReference type="KEGG" id="bcm:Bcenmc03_1007"/>
<dbReference type="HOGENOM" id="CLU_105066_2_0_4"/>
<dbReference type="Proteomes" id="UP000002169">
    <property type="component" value="Chromosome 1"/>
</dbReference>
<dbReference type="GO" id="GO:0005694">
    <property type="term" value="C:chromosome"/>
    <property type="evidence" value="ECO:0007669"/>
    <property type="project" value="InterPro"/>
</dbReference>
<dbReference type="GO" id="GO:0005829">
    <property type="term" value="C:cytosol"/>
    <property type="evidence" value="ECO:0007669"/>
    <property type="project" value="TreeGrafter"/>
</dbReference>
<dbReference type="GO" id="GO:0003677">
    <property type="term" value="F:DNA binding"/>
    <property type="evidence" value="ECO:0007669"/>
    <property type="project" value="UniProtKB-UniRule"/>
</dbReference>
<dbReference type="GO" id="GO:0030527">
    <property type="term" value="F:structural constituent of chromatin"/>
    <property type="evidence" value="ECO:0007669"/>
    <property type="project" value="InterPro"/>
</dbReference>
<dbReference type="GO" id="GO:0006310">
    <property type="term" value="P:DNA recombination"/>
    <property type="evidence" value="ECO:0007669"/>
    <property type="project" value="UniProtKB-UniRule"/>
</dbReference>
<dbReference type="GO" id="GO:0006355">
    <property type="term" value="P:regulation of DNA-templated transcription"/>
    <property type="evidence" value="ECO:0007669"/>
    <property type="project" value="UniProtKB-UniRule"/>
</dbReference>
<dbReference type="GO" id="GO:0006417">
    <property type="term" value="P:regulation of translation"/>
    <property type="evidence" value="ECO:0007669"/>
    <property type="project" value="UniProtKB-UniRule"/>
</dbReference>
<dbReference type="CDD" id="cd13836">
    <property type="entry name" value="IHF_B"/>
    <property type="match status" value="1"/>
</dbReference>
<dbReference type="Gene3D" id="4.10.520.10">
    <property type="entry name" value="IHF-like DNA-binding proteins"/>
    <property type="match status" value="1"/>
</dbReference>
<dbReference type="HAMAP" id="MF_00381">
    <property type="entry name" value="IHF_beta"/>
    <property type="match status" value="1"/>
</dbReference>
<dbReference type="InterPro" id="IPR000119">
    <property type="entry name" value="Hist_DNA-bd"/>
</dbReference>
<dbReference type="InterPro" id="IPR010992">
    <property type="entry name" value="IHF-like_DNA-bd_dom_sf"/>
</dbReference>
<dbReference type="InterPro" id="IPR005685">
    <property type="entry name" value="IHF_beta"/>
</dbReference>
<dbReference type="NCBIfam" id="TIGR00988">
    <property type="entry name" value="hip"/>
    <property type="match status" value="1"/>
</dbReference>
<dbReference type="NCBIfam" id="NF001222">
    <property type="entry name" value="PRK00199.1"/>
    <property type="match status" value="1"/>
</dbReference>
<dbReference type="PANTHER" id="PTHR33175">
    <property type="entry name" value="DNA-BINDING PROTEIN HU"/>
    <property type="match status" value="1"/>
</dbReference>
<dbReference type="PANTHER" id="PTHR33175:SF5">
    <property type="entry name" value="INTEGRATION HOST FACTOR SUBUNIT BETA"/>
    <property type="match status" value="1"/>
</dbReference>
<dbReference type="Pfam" id="PF00216">
    <property type="entry name" value="Bac_DNA_binding"/>
    <property type="match status" value="1"/>
</dbReference>
<dbReference type="PRINTS" id="PR01727">
    <property type="entry name" value="DNABINDINGHU"/>
</dbReference>
<dbReference type="SMART" id="SM00411">
    <property type="entry name" value="BHL"/>
    <property type="match status" value="1"/>
</dbReference>
<dbReference type="SUPFAM" id="SSF47729">
    <property type="entry name" value="IHF-like DNA-binding proteins"/>
    <property type="match status" value="1"/>
</dbReference>
<sequence length="107" mass="11913">MTKSELVAQLASRFPQLVLKDADFAVKTMLDAMSDALAKGHRIEIRGFGSFGLNRRPARVGRNPKSGEKVQVPEKFVPHFKPGKELRERVDGRAGEPLKADDPDDDR</sequence>
<name>IHFB_BURO0</name>
<organism>
    <name type="scientific">Burkholderia orbicola (strain MC0-3)</name>
    <dbReference type="NCBI Taxonomy" id="406425"/>
    <lineage>
        <taxon>Bacteria</taxon>
        <taxon>Pseudomonadati</taxon>
        <taxon>Pseudomonadota</taxon>
        <taxon>Betaproteobacteria</taxon>
        <taxon>Burkholderiales</taxon>
        <taxon>Burkholderiaceae</taxon>
        <taxon>Burkholderia</taxon>
        <taxon>Burkholderia cepacia complex</taxon>
        <taxon>Burkholderia orbicola</taxon>
    </lineage>
</organism>
<evidence type="ECO:0000255" key="1">
    <source>
        <dbReference type="HAMAP-Rule" id="MF_00381"/>
    </source>
</evidence>
<evidence type="ECO:0000256" key="2">
    <source>
        <dbReference type="SAM" id="MobiDB-lite"/>
    </source>
</evidence>
<feature type="chain" id="PRO_1000122189" description="Integration host factor subunit beta">
    <location>
        <begin position="1"/>
        <end position="107"/>
    </location>
</feature>
<feature type="region of interest" description="Disordered" evidence="2">
    <location>
        <begin position="76"/>
        <end position="107"/>
    </location>
</feature>
<feature type="compositionally biased region" description="Basic and acidic residues" evidence="2">
    <location>
        <begin position="82"/>
        <end position="101"/>
    </location>
</feature>
<keyword id="KW-0233">DNA recombination</keyword>
<keyword id="KW-0238">DNA-binding</keyword>
<keyword id="KW-0804">Transcription</keyword>
<keyword id="KW-0805">Transcription regulation</keyword>
<keyword id="KW-0810">Translation regulation</keyword>
<comment type="function">
    <text evidence="1">This protein is one of the two subunits of integration host factor, a specific DNA-binding protein that functions in genetic recombination as well as in transcriptional and translational control.</text>
</comment>
<comment type="subunit">
    <text evidence="1">Heterodimer of an alpha and a beta chain.</text>
</comment>
<comment type="similarity">
    <text evidence="1">Belongs to the bacterial histone-like protein family.</text>
</comment>
<reference key="1">
    <citation type="submission" date="2008-02" db="EMBL/GenBank/DDBJ databases">
        <title>Complete sequence of chromosome 1 of Burkholderia cenocepacia MC0-3.</title>
        <authorList>
            <person name="Copeland A."/>
            <person name="Lucas S."/>
            <person name="Lapidus A."/>
            <person name="Barry K."/>
            <person name="Bruce D."/>
            <person name="Goodwin L."/>
            <person name="Glavina del Rio T."/>
            <person name="Dalin E."/>
            <person name="Tice H."/>
            <person name="Pitluck S."/>
            <person name="Chain P."/>
            <person name="Malfatti S."/>
            <person name="Shin M."/>
            <person name="Vergez L."/>
            <person name="Schmutz J."/>
            <person name="Larimer F."/>
            <person name="Land M."/>
            <person name="Hauser L."/>
            <person name="Kyrpides N."/>
            <person name="Mikhailova N."/>
            <person name="Tiedje J."/>
            <person name="Richardson P."/>
        </authorList>
    </citation>
    <scope>NUCLEOTIDE SEQUENCE [LARGE SCALE GENOMIC DNA]</scope>
    <source>
        <strain>MC0-3</strain>
    </source>
</reference>
<gene>
    <name evidence="1" type="primary">ihfB</name>
    <name evidence="1" type="synonym">himD</name>
    <name type="ordered locus">Bcenmc03_1007</name>
</gene>
<accession>B1JXS2</accession>